<accession>B2HGE0</accession>
<sequence>MAKFLDSIAGFGVTFGSMFKKTVTEEYPEKPGPVAPRYHGRHQLNRYPDGLEKCIGCELCAWACPADAIYVEGADNTDEQRFSPGERYGRVYQINYLRCIGCGLCIEACPTRALTMTNDYELADDNRADLIYEKDRLLAPLQPEMTAPPHPRAAGATDKDYYLGNVTAEGLRETQKTGESR</sequence>
<gene>
    <name evidence="1" type="primary">nuoI</name>
    <name type="ordered locus">MMAR_1475</name>
</gene>
<protein>
    <recommendedName>
        <fullName evidence="1">NADH-quinone oxidoreductase subunit I</fullName>
        <ecNumber evidence="1">7.1.1.-</ecNumber>
    </recommendedName>
    <alternativeName>
        <fullName evidence="1">NADH dehydrogenase I subunit I</fullName>
    </alternativeName>
    <alternativeName>
        <fullName evidence="1">NDH-1 subunit I</fullName>
    </alternativeName>
</protein>
<feature type="chain" id="PRO_1000143657" description="NADH-quinone oxidoreductase subunit I">
    <location>
        <begin position="1"/>
        <end position="181"/>
    </location>
</feature>
<feature type="domain" description="4Fe-4S ferredoxin-type 1" evidence="1">
    <location>
        <begin position="44"/>
        <end position="74"/>
    </location>
</feature>
<feature type="domain" description="4Fe-4S ferredoxin-type 2" evidence="1">
    <location>
        <begin position="90"/>
        <end position="119"/>
    </location>
</feature>
<feature type="binding site" evidence="1">
    <location>
        <position position="54"/>
    </location>
    <ligand>
        <name>[4Fe-4S] cluster</name>
        <dbReference type="ChEBI" id="CHEBI:49883"/>
        <label>1</label>
    </ligand>
</feature>
<feature type="binding site" evidence="1">
    <location>
        <position position="57"/>
    </location>
    <ligand>
        <name>[4Fe-4S] cluster</name>
        <dbReference type="ChEBI" id="CHEBI:49883"/>
        <label>1</label>
    </ligand>
</feature>
<feature type="binding site" evidence="1">
    <location>
        <position position="60"/>
    </location>
    <ligand>
        <name>[4Fe-4S] cluster</name>
        <dbReference type="ChEBI" id="CHEBI:49883"/>
        <label>1</label>
    </ligand>
</feature>
<feature type="binding site" evidence="1">
    <location>
        <position position="64"/>
    </location>
    <ligand>
        <name>[4Fe-4S] cluster</name>
        <dbReference type="ChEBI" id="CHEBI:49883"/>
        <label>2</label>
    </ligand>
</feature>
<feature type="binding site" evidence="1">
    <location>
        <position position="99"/>
    </location>
    <ligand>
        <name>[4Fe-4S] cluster</name>
        <dbReference type="ChEBI" id="CHEBI:49883"/>
        <label>2</label>
    </ligand>
</feature>
<feature type="binding site" evidence="1">
    <location>
        <position position="102"/>
    </location>
    <ligand>
        <name>[4Fe-4S] cluster</name>
        <dbReference type="ChEBI" id="CHEBI:49883"/>
        <label>2</label>
    </ligand>
</feature>
<feature type="binding site" evidence="1">
    <location>
        <position position="105"/>
    </location>
    <ligand>
        <name>[4Fe-4S] cluster</name>
        <dbReference type="ChEBI" id="CHEBI:49883"/>
        <label>2</label>
    </ligand>
</feature>
<feature type="binding site" evidence="1">
    <location>
        <position position="109"/>
    </location>
    <ligand>
        <name>[4Fe-4S] cluster</name>
        <dbReference type="ChEBI" id="CHEBI:49883"/>
        <label>1</label>
    </ligand>
</feature>
<reference key="1">
    <citation type="journal article" date="2008" name="Genome Res.">
        <title>Insights from the complete genome sequence of Mycobacterium marinum on the evolution of Mycobacterium tuberculosis.</title>
        <authorList>
            <person name="Stinear T.P."/>
            <person name="Seemann T."/>
            <person name="Harrison P.F."/>
            <person name="Jenkin G.A."/>
            <person name="Davies J.K."/>
            <person name="Johnson P.D."/>
            <person name="Abdellah Z."/>
            <person name="Arrowsmith C."/>
            <person name="Chillingworth T."/>
            <person name="Churcher C."/>
            <person name="Clarke K."/>
            <person name="Cronin A."/>
            <person name="Davis P."/>
            <person name="Goodhead I."/>
            <person name="Holroyd N."/>
            <person name="Jagels K."/>
            <person name="Lord A."/>
            <person name="Moule S."/>
            <person name="Mungall K."/>
            <person name="Norbertczak H."/>
            <person name="Quail M.A."/>
            <person name="Rabbinowitsch E."/>
            <person name="Walker D."/>
            <person name="White B."/>
            <person name="Whitehead S."/>
            <person name="Small P.L."/>
            <person name="Brosch R."/>
            <person name="Ramakrishnan L."/>
            <person name="Fischbach M.A."/>
            <person name="Parkhill J."/>
            <person name="Cole S.T."/>
        </authorList>
    </citation>
    <scope>NUCLEOTIDE SEQUENCE [LARGE SCALE GENOMIC DNA]</scope>
    <source>
        <strain>ATCC BAA-535 / M</strain>
    </source>
</reference>
<organism>
    <name type="scientific">Mycobacterium marinum (strain ATCC BAA-535 / M)</name>
    <dbReference type="NCBI Taxonomy" id="216594"/>
    <lineage>
        <taxon>Bacteria</taxon>
        <taxon>Bacillati</taxon>
        <taxon>Actinomycetota</taxon>
        <taxon>Actinomycetes</taxon>
        <taxon>Mycobacteriales</taxon>
        <taxon>Mycobacteriaceae</taxon>
        <taxon>Mycobacterium</taxon>
        <taxon>Mycobacterium ulcerans group</taxon>
    </lineage>
</organism>
<proteinExistence type="inferred from homology"/>
<evidence type="ECO:0000255" key="1">
    <source>
        <dbReference type="HAMAP-Rule" id="MF_01351"/>
    </source>
</evidence>
<comment type="function">
    <text evidence="1">NDH-1 shuttles electrons from NADH, via FMN and iron-sulfur (Fe-S) centers, to quinones in the respiratory chain. The immediate electron acceptor for the enzyme in this species is believed to be menaquinone. Couples the redox reaction to proton translocation (for every two electrons transferred, four hydrogen ions are translocated across the cytoplasmic membrane), and thus conserves the redox energy in a proton gradient.</text>
</comment>
<comment type="catalytic activity">
    <reaction evidence="1">
        <text>a quinone + NADH + 5 H(+)(in) = a quinol + NAD(+) + 4 H(+)(out)</text>
        <dbReference type="Rhea" id="RHEA:57888"/>
        <dbReference type="ChEBI" id="CHEBI:15378"/>
        <dbReference type="ChEBI" id="CHEBI:24646"/>
        <dbReference type="ChEBI" id="CHEBI:57540"/>
        <dbReference type="ChEBI" id="CHEBI:57945"/>
        <dbReference type="ChEBI" id="CHEBI:132124"/>
    </reaction>
</comment>
<comment type="cofactor">
    <cofactor evidence="1">
        <name>[4Fe-4S] cluster</name>
        <dbReference type="ChEBI" id="CHEBI:49883"/>
    </cofactor>
    <text evidence="1">Binds 2 [4Fe-4S] clusters per subunit.</text>
</comment>
<comment type="subunit">
    <text evidence="1">NDH-1 is composed of 14 different subunits. Subunits NuoA, H, J, K, L, M, N constitute the membrane sector of the complex.</text>
</comment>
<comment type="subcellular location">
    <subcellularLocation>
        <location evidence="1">Cell membrane</location>
        <topology evidence="1">Peripheral membrane protein</topology>
    </subcellularLocation>
</comment>
<comment type="similarity">
    <text evidence="1">Belongs to the complex I 23 kDa subunit family.</text>
</comment>
<name>NUOI_MYCMM</name>
<dbReference type="EC" id="7.1.1.-" evidence="1"/>
<dbReference type="EMBL" id="CP000854">
    <property type="protein sequence ID" value="ACC39926.1"/>
    <property type="molecule type" value="Genomic_DNA"/>
</dbReference>
<dbReference type="SMR" id="B2HGE0"/>
<dbReference type="STRING" id="216594.MMAR_1475"/>
<dbReference type="KEGG" id="mmi:MMAR_1475"/>
<dbReference type="eggNOG" id="COG1143">
    <property type="taxonomic scope" value="Bacteria"/>
</dbReference>
<dbReference type="HOGENOM" id="CLU_067218_4_0_11"/>
<dbReference type="OrthoDB" id="9808559at2"/>
<dbReference type="Proteomes" id="UP000001190">
    <property type="component" value="Chromosome"/>
</dbReference>
<dbReference type="GO" id="GO:0005886">
    <property type="term" value="C:plasma membrane"/>
    <property type="evidence" value="ECO:0007669"/>
    <property type="project" value="UniProtKB-SubCell"/>
</dbReference>
<dbReference type="GO" id="GO:0051539">
    <property type="term" value="F:4 iron, 4 sulfur cluster binding"/>
    <property type="evidence" value="ECO:0007669"/>
    <property type="project" value="UniProtKB-KW"/>
</dbReference>
<dbReference type="GO" id="GO:0005506">
    <property type="term" value="F:iron ion binding"/>
    <property type="evidence" value="ECO:0007669"/>
    <property type="project" value="UniProtKB-UniRule"/>
</dbReference>
<dbReference type="GO" id="GO:0050136">
    <property type="term" value="F:NADH:ubiquinone reductase (non-electrogenic) activity"/>
    <property type="evidence" value="ECO:0007669"/>
    <property type="project" value="UniProtKB-UniRule"/>
</dbReference>
<dbReference type="GO" id="GO:0048038">
    <property type="term" value="F:quinone binding"/>
    <property type="evidence" value="ECO:0007669"/>
    <property type="project" value="UniProtKB-KW"/>
</dbReference>
<dbReference type="GO" id="GO:0009060">
    <property type="term" value="P:aerobic respiration"/>
    <property type="evidence" value="ECO:0007669"/>
    <property type="project" value="TreeGrafter"/>
</dbReference>
<dbReference type="FunFam" id="3.30.70.3270:FF:000007">
    <property type="entry name" value="NADH-quinone oxidoreductase subunit I"/>
    <property type="match status" value="1"/>
</dbReference>
<dbReference type="Gene3D" id="3.30.70.3270">
    <property type="match status" value="1"/>
</dbReference>
<dbReference type="HAMAP" id="MF_01351">
    <property type="entry name" value="NDH1_NuoI"/>
    <property type="match status" value="1"/>
</dbReference>
<dbReference type="InterPro" id="IPR017896">
    <property type="entry name" value="4Fe4S_Fe-S-bd"/>
</dbReference>
<dbReference type="InterPro" id="IPR017900">
    <property type="entry name" value="4Fe4S_Fe_S_CS"/>
</dbReference>
<dbReference type="InterPro" id="IPR010226">
    <property type="entry name" value="NADH_quinone_OxRdtase_chainI"/>
</dbReference>
<dbReference type="NCBIfam" id="TIGR01971">
    <property type="entry name" value="NuoI"/>
    <property type="match status" value="1"/>
</dbReference>
<dbReference type="NCBIfam" id="NF004537">
    <property type="entry name" value="PRK05888.1-3"/>
    <property type="match status" value="1"/>
</dbReference>
<dbReference type="PANTHER" id="PTHR10849:SF20">
    <property type="entry name" value="NADH DEHYDROGENASE [UBIQUINONE] IRON-SULFUR PROTEIN 8, MITOCHONDRIAL"/>
    <property type="match status" value="1"/>
</dbReference>
<dbReference type="PANTHER" id="PTHR10849">
    <property type="entry name" value="NADH DEHYDROGENASE UBIQUINONE IRON-SULFUR PROTEIN 8, MITOCHONDRIAL"/>
    <property type="match status" value="1"/>
</dbReference>
<dbReference type="Pfam" id="PF12838">
    <property type="entry name" value="Fer4_7"/>
    <property type="match status" value="1"/>
</dbReference>
<dbReference type="SUPFAM" id="SSF54862">
    <property type="entry name" value="4Fe-4S ferredoxins"/>
    <property type="match status" value="1"/>
</dbReference>
<dbReference type="PROSITE" id="PS00198">
    <property type="entry name" value="4FE4S_FER_1"/>
    <property type="match status" value="2"/>
</dbReference>
<dbReference type="PROSITE" id="PS51379">
    <property type="entry name" value="4FE4S_FER_2"/>
    <property type="match status" value="2"/>
</dbReference>
<keyword id="KW-0004">4Fe-4S</keyword>
<keyword id="KW-1003">Cell membrane</keyword>
<keyword id="KW-0408">Iron</keyword>
<keyword id="KW-0411">Iron-sulfur</keyword>
<keyword id="KW-0472">Membrane</keyword>
<keyword id="KW-0479">Metal-binding</keyword>
<keyword id="KW-0520">NAD</keyword>
<keyword id="KW-0874">Quinone</keyword>
<keyword id="KW-1185">Reference proteome</keyword>
<keyword id="KW-0677">Repeat</keyword>
<keyword id="KW-1278">Translocase</keyword>